<feature type="chain" id="PRO_0000087578" description="GRAM domain-containing protein 2B">
    <location>
        <begin position="1"/>
        <end position="445"/>
    </location>
</feature>
<feature type="domain" description="GRAM">
    <location>
        <begin position="123"/>
        <end position="190"/>
    </location>
</feature>
<feature type="region of interest" description="Disordered" evidence="2">
    <location>
        <begin position="1"/>
        <end position="118"/>
    </location>
</feature>
<feature type="region of interest" description="Disordered" evidence="2">
    <location>
        <begin position="233"/>
        <end position="252"/>
    </location>
</feature>
<feature type="region of interest" description="Disordered" evidence="2">
    <location>
        <begin position="277"/>
        <end position="331"/>
    </location>
</feature>
<feature type="compositionally biased region" description="Polar residues" evidence="2">
    <location>
        <begin position="18"/>
        <end position="44"/>
    </location>
</feature>
<feature type="compositionally biased region" description="Polar residues" evidence="2">
    <location>
        <begin position="56"/>
        <end position="68"/>
    </location>
</feature>
<feature type="compositionally biased region" description="Low complexity" evidence="2">
    <location>
        <begin position="82"/>
        <end position="93"/>
    </location>
</feature>
<feature type="compositionally biased region" description="Basic and acidic residues" evidence="2">
    <location>
        <begin position="94"/>
        <end position="112"/>
    </location>
</feature>
<feature type="compositionally biased region" description="Polar residues" evidence="2">
    <location>
        <begin position="233"/>
        <end position="246"/>
    </location>
</feature>
<feature type="compositionally biased region" description="Polar residues" evidence="2">
    <location>
        <begin position="281"/>
        <end position="291"/>
    </location>
</feature>
<feature type="compositionally biased region" description="Basic and acidic residues" evidence="2">
    <location>
        <begin position="311"/>
        <end position="330"/>
    </location>
</feature>
<feature type="modified residue" description="N-acetylmethionine" evidence="1">
    <location>
        <position position="1"/>
    </location>
</feature>
<feature type="modified residue" description="Phosphoserine" evidence="4">
    <location>
        <position position="238"/>
    </location>
</feature>
<feature type="modified residue" description="Phosphoserine" evidence="4">
    <location>
        <position position="255"/>
    </location>
</feature>
<feature type="modified residue" description="Phosphoserine" evidence="4">
    <location>
        <position position="265"/>
    </location>
</feature>
<feature type="sequence conflict" description="In Ref. 2; AAH57978." evidence="3" ref="2">
    <original>N</original>
    <variation>K</variation>
    <location>
        <position position="232"/>
    </location>
</feature>
<name>GRM2B_MOUSE</name>
<gene>
    <name type="primary">Gramd2b</name>
    <name type="synonym">Gramd3</name>
</gene>
<keyword id="KW-0007">Acetylation</keyword>
<keyword id="KW-0597">Phosphoprotein</keyword>
<keyword id="KW-1185">Reference proteome</keyword>
<protein>
    <recommendedName>
        <fullName>GRAM domain-containing protein 2B</fullName>
    </recommendedName>
    <alternativeName>
        <fullName>GRAM domain-containing protein 3</fullName>
    </alternativeName>
</protein>
<sequence>MVKKRLSSSDNVFKFEIPSNSKTSAEAPHSSTDSPSSVFLSSEAENGAEDRRRVSKSPTAQSPTSSVEAESPDQKRSLGLWSKSSFDGSSLLSDKNDCKTESKTDSKTERKKSSSSSQYKANMHFHKLFLDVPTEEPLRQSFTCALQKEILYQGKLFVSENWICFHSKVFGKDTKISIPAFSVTLIKKTKTALLVPNALIIATVTDRYIFVSLLSRDSTYKLIKSVCGHLENTSVGNSPNPSSAENSFRADRPSSLPLDFNDEFSDLDGVVRQRRQDLEGYSSSGSQTPESENSRDFHVTESQTVLNVTKGETKPPRTDAHGSRAPDGKAKILPAHGQSETIGILHKMESRKCPTLHHILIVYAIIVCALIISTFYMRYRINTLEERLGTLTSIMDPHSTEQTAPSGLGSQMQLNVEVLCQELTANIVKLEKIQNNLQKLLENGD</sequence>
<accession>Q6PEM6</accession>
<accession>E9Q8C6</accession>
<dbReference type="EMBL" id="AC120797">
    <property type="status" value="NOT_ANNOTATED_CDS"/>
    <property type="molecule type" value="Genomic_DNA"/>
</dbReference>
<dbReference type="EMBL" id="AC162035">
    <property type="status" value="NOT_ANNOTATED_CDS"/>
    <property type="molecule type" value="Genomic_DNA"/>
</dbReference>
<dbReference type="EMBL" id="BC057978">
    <property type="protein sequence ID" value="AAH57978.1"/>
    <property type="molecule type" value="mRNA"/>
</dbReference>
<dbReference type="CCDS" id="CCDS89243.1"/>
<dbReference type="RefSeq" id="NP_001347846.1">
    <property type="nucleotide sequence ID" value="NM_001360917.1"/>
</dbReference>
<dbReference type="RefSeq" id="XP_006525557.1">
    <property type="nucleotide sequence ID" value="XM_006525494.1"/>
</dbReference>
<dbReference type="SMR" id="Q6PEM6"/>
<dbReference type="BioGRID" id="223187">
    <property type="interactions" value="1"/>
</dbReference>
<dbReference type="FunCoup" id="Q6PEM6">
    <property type="interactions" value="53"/>
</dbReference>
<dbReference type="STRING" id="10090.ENSMUSP00000157710"/>
<dbReference type="iPTMnet" id="Q6PEM6"/>
<dbReference type="PhosphoSitePlus" id="Q6PEM6"/>
<dbReference type="jPOST" id="Q6PEM6"/>
<dbReference type="PaxDb" id="10090-ENSMUSP00000068453"/>
<dbReference type="ProteomicsDB" id="269637"/>
<dbReference type="Antibodypedia" id="2140">
    <property type="antibodies" value="209 antibodies from 24 providers"/>
</dbReference>
<dbReference type="Ensembl" id="ENSMUST00000237422.2">
    <property type="protein sequence ID" value="ENSMUSP00000157609.2"/>
    <property type="gene ID" value="ENSMUSG00000001700.11"/>
</dbReference>
<dbReference type="GeneID" id="107022"/>
<dbReference type="UCSC" id="uc008eyk.1">
    <property type="organism name" value="mouse"/>
</dbReference>
<dbReference type="AGR" id="MGI:1914815"/>
<dbReference type="MGI" id="MGI:1914815">
    <property type="gene designation" value="Gramd2b"/>
</dbReference>
<dbReference type="VEuPathDB" id="HostDB:ENSMUSG00000001700"/>
<dbReference type="eggNOG" id="KOG1032">
    <property type="taxonomic scope" value="Eukaryota"/>
</dbReference>
<dbReference type="GeneTree" id="ENSGT00940000156980"/>
<dbReference type="InParanoid" id="Q6PEM6"/>
<dbReference type="OrthoDB" id="74360at2759"/>
<dbReference type="BioGRID-ORCS" id="107022">
    <property type="hits" value="2 hits in 77 CRISPR screens"/>
</dbReference>
<dbReference type="ChiTaRS" id="Gramd3">
    <property type="organism name" value="mouse"/>
</dbReference>
<dbReference type="PRO" id="PR:Q6PEM6"/>
<dbReference type="Proteomes" id="UP000000589">
    <property type="component" value="Chromosome 18"/>
</dbReference>
<dbReference type="RNAct" id="Q6PEM6">
    <property type="molecule type" value="protein"/>
</dbReference>
<dbReference type="Bgee" id="ENSMUSG00000001700">
    <property type="expression patterns" value="Expressed in small intestine Peyer's patch and 239 other cell types or tissues"/>
</dbReference>
<dbReference type="ExpressionAtlas" id="Q6PEM6">
    <property type="expression patterns" value="baseline and differential"/>
</dbReference>
<dbReference type="GO" id="GO:0005881">
    <property type="term" value="C:cytoplasmic microtubule"/>
    <property type="evidence" value="ECO:0000250"/>
    <property type="project" value="UniProtKB"/>
</dbReference>
<dbReference type="CDD" id="cd13220">
    <property type="entry name" value="PH-GRAM_GRAMDC"/>
    <property type="match status" value="1"/>
</dbReference>
<dbReference type="FunFam" id="2.30.29.30:FF:000086">
    <property type="entry name" value="GRAM domain-containing protein 2B isoform 2"/>
    <property type="match status" value="1"/>
</dbReference>
<dbReference type="Gene3D" id="2.30.29.30">
    <property type="entry name" value="Pleckstrin-homology domain (PH domain)/Phosphotyrosine-binding domain (PTB)"/>
    <property type="match status" value="1"/>
</dbReference>
<dbReference type="InterPro" id="IPR004182">
    <property type="entry name" value="GRAM"/>
</dbReference>
<dbReference type="InterPro" id="IPR052633">
    <property type="entry name" value="GRAM_domain_protein_2B"/>
</dbReference>
<dbReference type="InterPro" id="IPR011993">
    <property type="entry name" value="PH-like_dom_sf"/>
</dbReference>
<dbReference type="PANTHER" id="PTHR46645:SF2">
    <property type="entry name" value="GRAM DOMAIN-CONTAINING PROTEIN 2B"/>
    <property type="match status" value="1"/>
</dbReference>
<dbReference type="PANTHER" id="PTHR46645">
    <property type="entry name" value="GRAM DOMAIN-CONTAINING PROTEIN 2B-RELATED"/>
    <property type="match status" value="1"/>
</dbReference>
<dbReference type="Pfam" id="PF02893">
    <property type="entry name" value="GRAM"/>
    <property type="match status" value="1"/>
</dbReference>
<dbReference type="SMART" id="SM00568">
    <property type="entry name" value="GRAM"/>
    <property type="match status" value="1"/>
</dbReference>
<evidence type="ECO:0000250" key="1">
    <source>
        <dbReference type="UniProtKB" id="Q96HH9"/>
    </source>
</evidence>
<evidence type="ECO:0000256" key="2">
    <source>
        <dbReference type="SAM" id="MobiDB-lite"/>
    </source>
</evidence>
<evidence type="ECO:0000305" key="3"/>
<evidence type="ECO:0007744" key="4">
    <source>
    </source>
</evidence>
<proteinExistence type="evidence at protein level"/>
<organism>
    <name type="scientific">Mus musculus</name>
    <name type="common">Mouse</name>
    <dbReference type="NCBI Taxonomy" id="10090"/>
    <lineage>
        <taxon>Eukaryota</taxon>
        <taxon>Metazoa</taxon>
        <taxon>Chordata</taxon>
        <taxon>Craniata</taxon>
        <taxon>Vertebrata</taxon>
        <taxon>Euteleostomi</taxon>
        <taxon>Mammalia</taxon>
        <taxon>Eutheria</taxon>
        <taxon>Euarchontoglires</taxon>
        <taxon>Glires</taxon>
        <taxon>Rodentia</taxon>
        <taxon>Myomorpha</taxon>
        <taxon>Muroidea</taxon>
        <taxon>Muridae</taxon>
        <taxon>Murinae</taxon>
        <taxon>Mus</taxon>
        <taxon>Mus</taxon>
    </lineage>
</organism>
<reference key="1">
    <citation type="journal article" date="2009" name="PLoS Biol.">
        <title>Lineage-specific biology revealed by a finished genome assembly of the mouse.</title>
        <authorList>
            <person name="Church D.M."/>
            <person name="Goodstadt L."/>
            <person name="Hillier L.W."/>
            <person name="Zody M.C."/>
            <person name="Goldstein S."/>
            <person name="She X."/>
            <person name="Bult C.J."/>
            <person name="Agarwala R."/>
            <person name="Cherry J.L."/>
            <person name="DiCuccio M."/>
            <person name="Hlavina W."/>
            <person name="Kapustin Y."/>
            <person name="Meric P."/>
            <person name="Maglott D."/>
            <person name="Birtle Z."/>
            <person name="Marques A.C."/>
            <person name="Graves T."/>
            <person name="Zhou S."/>
            <person name="Teague B."/>
            <person name="Potamousis K."/>
            <person name="Churas C."/>
            <person name="Place M."/>
            <person name="Herschleb J."/>
            <person name="Runnheim R."/>
            <person name="Forrest D."/>
            <person name="Amos-Landgraf J."/>
            <person name="Schwartz D.C."/>
            <person name="Cheng Z."/>
            <person name="Lindblad-Toh K."/>
            <person name="Eichler E.E."/>
            <person name="Ponting C.P."/>
        </authorList>
    </citation>
    <scope>NUCLEOTIDE SEQUENCE [LARGE SCALE GENOMIC DNA]</scope>
    <source>
        <strain>C57BL/6J</strain>
    </source>
</reference>
<reference key="2">
    <citation type="journal article" date="2004" name="Genome Res.">
        <title>The status, quality, and expansion of the NIH full-length cDNA project: the Mammalian Gene Collection (MGC).</title>
        <authorList>
            <consortium name="The MGC Project Team"/>
        </authorList>
    </citation>
    <scope>NUCLEOTIDE SEQUENCE [LARGE SCALE MRNA]</scope>
    <source>
        <strain>FVB/N</strain>
        <tissue>Kidney</tissue>
    </source>
</reference>
<reference key="3">
    <citation type="journal article" date="2007" name="Proc. Natl. Acad. Sci. U.S.A.">
        <title>Large-scale phosphorylation analysis of mouse liver.</title>
        <authorList>
            <person name="Villen J."/>
            <person name="Beausoleil S.A."/>
            <person name="Gerber S.A."/>
            <person name="Gygi S.P."/>
        </authorList>
    </citation>
    <scope>IDENTIFICATION BY MASS SPECTROMETRY [LARGE SCALE ANALYSIS]</scope>
    <source>
        <tissue>Liver</tissue>
    </source>
</reference>
<reference key="4">
    <citation type="journal article" date="2010" name="Cell">
        <title>A tissue-specific atlas of mouse protein phosphorylation and expression.</title>
        <authorList>
            <person name="Huttlin E.L."/>
            <person name="Jedrychowski M.P."/>
            <person name="Elias J.E."/>
            <person name="Goswami T."/>
            <person name="Rad R."/>
            <person name="Beausoleil S.A."/>
            <person name="Villen J."/>
            <person name="Haas W."/>
            <person name="Sowa M.E."/>
            <person name="Gygi S.P."/>
        </authorList>
    </citation>
    <scope>PHOSPHORYLATION [LARGE SCALE ANALYSIS] AT SER-238; SER-255 AND SER-265</scope>
    <scope>IDENTIFICATION BY MASS SPECTROMETRY [LARGE SCALE ANALYSIS]</scope>
    <source>
        <tissue>Brain</tissue>
        <tissue>Brown adipose tissue</tissue>
        <tissue>Heart</tissue>
        <tissue>Kidney</tissue>
        <tissue>Liver</tissue>
        <tissue>Lung</tissue>
        <tissue>Pancreas</tissue>
        <tissue>Spleen</tissue>
        <tissue>Testis</tissue>
    </source>
</reference>